<dbReference type="EC" id="7.1.2.2" evidence="1"/>
<dbReference type="EMBL" id="CR954199">
    <property type="protein sequence ID" value="CAL36372.1"/>
    <property type="molecule type" value="Genomic_DNA"/>
</dbReference>
<dbReference type="RefSeq" id="YP_717250.1">
    <property type="nucleotide sequence ID" value="NC_008289.1"/>
</dbReference>
<dbReference type="SMR" id="Q0P3K5"/>
<dbReference type="FunCoup" id="Q0P3K5">
    <property type="interactions" value="200"/>
</dbReference>
<dbReference type="STRING" id="70448.Q0P3K5"/>
<dbReference type="GeneID" id="4238807"/>
<dbReference type="KEGG" id="ota:OstapCp47"/>
<dbReference type="eggNOG" id="KOG1353">
    <property type="taxonomic scope" value="Eukaryota"/>
</dbReference>
<dbReference type="InParanoid" id="Q0P3K5"/>
<dbReference type="Proteomes" id="UP000009170">
    <property type="component" value="Chloroplast"/>
</dbReference>
<dbReference type="GO" id="GO:0009535">
    <property type="term" value="C:chloroplast thylakoid membrane"/>
    <property type="evidence" value="ECO:0007669"/>
    <property type="project" value="UniProtKB-SubCell"/>
</dbReference>
<dbReference type="GO" id="GO:0045259">
    <property type="term" value="C:proton-transporting ATP synthase complex"/>
    <property type="evidence" value="ECO:0007669"/>
    <property type="project" value="UniProtKB-KW"/>
</dbReference>
<dbReference type="GO" id="GO:0043531">
    <property type="term" value="F:ADP binding"/>
    <property type="evidence" value="ECO:0007669"/>
    <property type="project" value="TreeGrafter"/>
</dbReference>
<dbReference type="GO" id="GO:0005524">
    <property type="term" value="F:ATP binding"/>
    <property type="evidence" value="ECO:0007669"/>
    <property type="project" value="UniProtKB-UniRule"/>
</dbReference>
<dbReference type="GO" id="GO:0046933">
    <property type="term" value="F:proton-transporting ATP synthase activity, rotational mechanism"/>
    <property type="evidence" value="ECO:0007669"/>
    <property type="project" value="UniProtKB-UniRule"/>
</dbReference>
<dbReference type="CDD" id="cd18113">
    <property type="entry name" value="ATP-synt_F1_alpha_C"/>
    <property type="match status" value="1"/>
</dbReference>
<dbReference type="CDD" id="cd18116">
    <property type="entry name" value="ATP-synt_F1_alpha_N"/>
    <property type="match status" value="1"/>
</dbReference>
<dbReference type="CDD" id="cd01132">
    <property type="entry name" value="F1-ATPase_alpha_CD"/>
    <property type="match status" value="1"/>
</dbReference>
<dbReference type="FunFam" id="1.20.150.20:FF:000001">
    <property type="entry name" value="ATP synthase subunit alpha"/>
    <property type="match status" value="1"/>
</dbReference>
<dbReference type="FunFam" id="2.40.30.20:FF:000001">
    <property type="entry name" value="ATP synthase subunit alpha"/>
    <property type="match status" value="1"/>
</dbReference>
<dbReference type="FunFam" id="3.40.50.300:FF:000002">
    <property type="entry name" value="ATP synthase subunit alpha"/>
    <property type="match status" value="1"/>
</dbReference>
<dbReference type="Gene3D" id="2.40.30.20">
    <property type="match status" value="1"/>
</dbReference>
<dbReference type="Gene3D" id="1.20.150.20">
    <property type="entry name" value="ATP synthase alpha/beta chain, C-terminal domain"/>
    <property type="match status" value="1"/>
</dbReference>
<dbReference type="Gene3D" id="3.40.50.300">
    <property type="entry name" value="P-loop containing nucleotide triphosphate hydrolases"/>
    <property type="match status" value="1"/>
</dbReference>
<dbReference type="HAMAP" id="MF_01346">
    <property type="entry name" value="ATP_synth_alpha_bact"/>
    <property type="match status" value="1"/>
</dbReference>
<dbReference type="InterPro" id="IPR023366">
    <property type="entry name" value="ATP_synth_asu-like_sf"/>
</dbReference>
<dbReference type="InterPro" id="IPR000793">
    <property type="entry name" value="ATP_synth_asu_C"/>
</dbReference>
<dbReference type="InterPro" id="IPR038376">
    <property type="entry name" value="ATP_synth_asu_C_sf"/>
</dbReference>
<dbReference type="InterPro" id="IPR033732">
    <property type="entry name" value="ATP_synth_F1_a_nt-bd_dom"/>
</dbReference>
<dbReference type="InterPro" id="IPR005294">
    <property type="entry name" value="ATP_synth_F1_asu"/>
</dbReference>
<dbReference type="InterPro" id="IPR020003">
    <property type="entry name" value="ATPase_a/bsu_AS"/>
</dbReference>
<dbReference type="InterPro" id="IPR004100">
    <property type="entry name" value="ATPase_F1/V1/A1_a/bsu_N"/>
</dbReference>
<dbReference type="InterPro" id="IPR036121">
    <property type="entry name" value="ATPase_F1/V1/A1_a/bsu_N_sf"/>
</dbReference>
<dbReference type="InterPro" id="IPR000194">
    <property type="entry name" value="ATPase_F1/V1/A1_a/bsu_nucl-bd"/>
</dbReference>
<dbReference type="InterPro" id="IPR027417">
    <property type="entry name" value="P-loop_NTPase"/>
</dbReference>
<dbReference type="NCBIfam" id="TIGR00962">
    <property type="entry name" value="atpA"/>
    <property type="match status" value="1"/>
</dbReference>
<dbReference type="NCBIfam" id="NF009884">
    <property type="entry name" value="PRK13343.1"/>
    <property type="match status" value="1"/>
</dbReference>
<dbReference type="PANTHER" id="PTHR48082">
    <property type="entry name" value="ATP SYNTHASE SUBUNIT ALPHA, MITOCHONDRIAL"/>
    <property type="match status" value="1"/>
</dbReference>
<dbReference type="PANTHER" id="PTHR48082:SF2">
    <property type="entry name" value="ATP SYNTHASE SUBUNIT ALPHA, MITOCHONDRIAL"/>
    <property type="match status" value="1"/>
</dbReference>
<dbReference type="Pfam" id="PF00006">
    <property type="entry name" value="ATP-synt_ab"/>
    <property type="match status" value="1"/>
</dbReference>
<dbReference type="Pfam" id="PF00306">
    <property type="entry name" value="ATP-synt_ab_C"/>
    <property type="match status" value="1"/>
</dbReference>
<dbReference type="Pfam" id="PF02874">
    <property type="entry name" value="ATP-synt_ab_N"/>
    <property type="match status" value="1"/>
</dbReference>
<dbReference type="PIRSF" id="PIRSF039088">
    <property type="entry name" value="F_ATPase_subunit_alpha"/>
    <property type="match status" value="1"/>
</dbReference>
<dbReference type="SUPFAM" id="SSF47917">
    <property type="entry name" value="C-terminal domain of alpha and beta subunits of F1 ATP synthase"/>
    <property type="match status" value="1"/>
</dbReference>
<dbReference type="SUPFAM" id="SSF50615">
    <property type="entry name" value="N-terminal domain of alpha and beta subunits of F1 ATP synthase"/>
    <property type="match status" value="1"/>
</dbReference>
<dbReference type="SUPFAM" id="SSF52540">
    <property type="entry name" value="P-loop containing nucleoside triphosphate hydrolases"/>
    <property type="match status" value="1"/>
</dbReference>
<dbReference type="PROSITE" id="PS00152">
    <property type="entry name" value="ATPASE_ALPHA_BETA"/>
    <property type="match status" value="1"/>
</dbReference>
<geneLocation type="chloroplast"/>
<keyword id="KW-0066">ATP synthesis</keyword>
<keyword id="KW-0067">ATP-binding</keyword>
<keyword id="KW-0139">CF(1)</keyword>
<keyword id="KW-0150">Chloroplast</keyword>
<keyword id="KW-0375">Hydrogen ion transport</keyword>
<keyword id="KW-0406">Ion transport</keyword>
<keyword id="KW-0472">Membrane</keyword>
<keyword id="KW-0547">Nucleotide-binding</keyword>
<keyword id="KW-0934">Plastid</keyword>
<keyword id="KW-1185">Reference proteome</keyword>
<keyword id="KW-0793">Thylakoid</keyword>
<keyword id="KW-1278">Translocase</keyword>
<keyword id="KW-0813">Transport</keyword>
<evidence type="ECO:0000255" key="1">
    <source>
        <dbReference type="HAMAP-Rule" id="MF_01346"/>
    </source>
</evidence>
<organism>
    <name type="scientific">Ostreococcus tauri</name>
    <dbReference type="NCBI Taxonomy" id="70448"/>
    <lineage>
        <taxon>Eukaryota</taxon>
        <taxon>Viridiplantae</taxon>
        <taxon>Chlorophyta</taxon>
        <taxon>Mamiellophyceae</taxon>
        <taxon>Mamiellales</taxon>
        <taxon>Bathycoccaceae</taxon>
        <taxon>Ostreococcus</taxon>
    </lineage>
</organism>
<reference key="1">
    <citation type="journal article" date="2007" name="Mol. Biol. Evol.">
        <title>The complete chloroplast and mitochondrial DNA sequence of Ostreococcus tauri: organelle genomes of the smallest eukaryote are examples of compaction.</title>
        <authorList>
            <person name="Robbens S."/>
            <person name="Derelle E."/>
            <person name="Ferraz C."/>
            <person name="Wuyts J."/>
            <person name="Moreau H."/>
            <person name="Van de Peer Y."/>
        </authorList>
    </citation>
    <scope>NUCLEOTIDE SEQUENCE [LARGE SCALE GENOMIC DNA]</scope>
    <source>
        <strain>OTTH0595</strain>
    </source>
</reference>
<gene>
    <name evidence="1" type="primary">atpA</name>
    <name type="ordered locus">OtCpg00470</name>
</gene>
<proteinExistence type="inferred from homology"/>
<comment type="function">
    <text evidence="1">Produces ATP from ADP in the presence of a proton gradient across the membrane. The alpha chain is a regulatory subunit.</text>
</comment>
<comment type="catalytic activity">
    <reaction evidence="1">
        <text>ATP + H2O + 4 H(+)(in) = ADP + phosphate + 5 H(+)(out)</text>
        <dbReference type="Rhea" id="RHEA:57720"/>
        <dbReference type="ChEBI" id="CHEBI:15377"/>
        <dbReference type="ChEBI" id="CHEBI:15378"/>
        <dbReference type="ChEBI" id="CHEBI:30616"/>
        <dbReference type="ChEBI" id="CHEBI:43474"/>
        <dbReference type="ChEBI" id="CHEBI:456216"/>
        <dbReference type="EC" id="7.1.2.2"/>
    </reaction>
</comment>
<comment type="subunit">
    <text evidence="1">F-type ATPases have 2 components, CF(1) - the catalytic core - and CF(0) - the membrane proton channel. CF(1) has five subunits: alpha(3), beta(3), gamma(1), delta(1), epsilon(1). CF(0) has four main subunits: a, b, b' and c.</text>
</comment>
<comment type="subcellular location">
    <subcellularLocation>
        <location evidence="1">Plastid</location>
        <location evidence="1">Chloroplast thylakoid membrane</location>
        <topology evidence="1">Peripheral membrane protein</topology>
    </subcellularLocation>
</comment>
<comment type="similarity">
    <text evidence="1">Belongs to the ATPase alpha/beta chains family.</text>
</comment>
<name>ATPA_OSTTA</name>
<protein>
    <recommendedName>
        <fullName evidence="1">ATP synthase subunit alpha, chloroplastic</fullName>
        <ecNumber evidence="1">7.1.2.2</ecNumber>
    </recommendedName>
    <alternativeName>
        <fullName evidence="1">ATP synthase F1 sector subunit alpha</fullName>
    </alternativeName>
    <alternativeName>
        <fullName evidence="1">F-ATPase subunit alpha</fullName>
    </alternativeName>
</protein>
<feature type="chain" id="PRO_0000256122" description="ATP synthase subunit alpha, chloroplastic">
    <location>
        <begin position="1"/>
        <end position="504"/>
    </location>
</feature>
<feature type="binding site" evidence="1">
    <location>
        <begin position="170"/>
        <end position="177"/>
    </location>
    <ligand>
        <name>ATP</name>
        <dbReference type="ChEBI" id="CHEBI:30616"/>
    </ligand>
</feature>
<feature type="site" description="Required for activity" evidence="1">
    <location>
        <position position="363"/>
    </location>
</feature>
<sequence>MVKIRPDEISSVIRQQIEQYTQEAQVVNVGTVLQVGDGIARIYGLQKVMSGELLEFQDGTIGVALNLETDNVGAVLMGDGLKIQEGDSVKATGKIAQVPVGEAFLGRVVDALARPIDGRGDIKADGTRLIESPAPGIIARRSVYEPLQTGLVSIDAMIPIGRGQRELIIGDRQTGKTAVATDTIINQKGGDVICVYVAIGQKASSVAQIVTTLTNAGAMDYTIIVSETADSPATLQYLAPYTGASLAEYFMYTGRATLIIYDDLSKQAQAYRQMSLLLKRPPGREAYPGDVFYLHSRLLERAAKLSDALGEGSMTALPIIETQGGDVSAYIPTNVISITDGQVFLSADLFNSGIRPAINVGISVSRVGSAAQIKAMKQVAGTLKLELAQFAELEAFSQFASDLDQATQNQLARGARLRELLKQAQNQPLSVDMQVATIYTGTQGHLDDLAVGQVRSFLTGLREYIKTNKASFCSDVTSSKKFGPEAEEMLKAAIAEYKAIFKAS</sequence>
<accession>Q0P3K5</accession>